<keyword id="KW-0328">Glycosyltransferase</keyword>
<keyword id="KW-0479">Metal-binding</keyword>
<keyword id="KW-0671">Queuosine biosynthesis</keyword>
<keyword id="KW-0808">Transferase</keyword>
<keyword id="KW-0819">tRNA processing</keyword>
<keyword id="KW-0862">Zinc</keyword>
<gene>
    <name evidence="1" type="primary">tgt</name>
    <name type="ordered locus">SAB1508c</name>
</gene>
<reference key="1">
    <citation type="journal article" date="2007" name="PLoS ONE">
        <title>Molecular correlates of host specialization in Staphylococcus aureus.</title>
        <authorList>
            <person name="Herron-Olson L."/>
            <person name="Fitzgerald J.R."/>
            <person name="Musser J.M."/>
            <person name="Kapur V."/>
        </authorList>
    </citation>
    <scope>NUCLEOTIDE SEQUENCE [LARGE SCALE GENOMIC DNA]</scope>
    <source>
        <strain>bovine RF122 / ET3-1</strain>
    </source>
</reference>
<organism>
    <name type="scientific">Staphylococcus aureus (strain bovine RF122 / ET3-1)</name>
    <dbReference type="NCBI Taxonomy" id="273036"/>
    <lineage>
        <taxon>Bacteria</taxon>
        <taxon>Bacillati</taxon>
        <taxon>Bacillota</taxon>
        <taxon>Bacilli</taxon>
        <taxon>Bacillales</taxon>
        <taxon>Staphylococcaceae</taxon>
        <taxon>Staphylococcus</taxon>
    </lineage>
</organism>
<protein>
    <recommendedName>
        <fullName evidence="1">Queuine tRNA-ribosyltransferase</fullName>
        <ecNumber evidence="1">2.4.2.29</ecNumber>
    </recommendedName>
    <alternativeName>
        <fullName evidence="1">Guanine insertion enzyme</fullName>
    </alternativeName>
    <alternativeName>
        <fullName evidence="1">tRNA-guanine transglycosylase</fullName>
    </alternativeName>
</protein>
<dbReference type="EC" id="2.4.2.29" evidence="1"/>
<dbReference type="EMBL" id="AJ938182">
    <property type="protein sequence ID" value="CAI81197.1"/>
    <property type="molecule type" value="Genomic_DNA"/>
</dbReference>
<dbReference type="RefSeq" id="WP_001112041.1">
    <property type="nucleotide sequence ID" value="NC_007622.1"/>
</dbReference>
<dbReference type="SMR" id="Q2YT91"/>
<dbReference type="KEGG" id="sab:SAB1508c"/>
<dbReference type="HOGENOM" id="CLU_022060_0_1_9"/>
<dbReference type="UniPathway" id="UPA00392"/>
<dbReference type="GO" id="GO:0005829">
    <property type="term" value="C:cytosol"/>
    <property type="evidence" value="ECO:0007669"/>
    <property type="project" value="TreeGrafter"/>
</dbReference>
<dbReference type="GO" id="GO:0046872">
    <property type="term" value="F:metal ion binding"/>
    <property type="evidence" value="ECO:0007669"/>
    <property type="project" value="UniProtKB-KW"/>
</dbReference>
<dbReference type="GO" id="GO:0008479">
    <property type="term" value="F:tRNA-guanosine(34) queuine transglycosylase activity"/>
    <property type="evidence" value="ECO:0007669"/>
    <property type="project" value="UniProtKB-UniRule"/>
</dbReference>
<dbReference type="GO" id="GO:0008616">
    <property type="term" value="P:queuosine biosynthetic process"/>
    <property type="evidence" value="ECO:0007669"/>
    <property type="project" value="UniProtKB-UniRule"/>
</dbReference>
<dbReference type="GO" id="GO:0002099">
    <property type="term" value="P:tRNA wobble guanine modification"/>
    <property type="evidence" value="ECO:0007669"/>
    <property type="project" value="TreeGrafter"/>
</dbReference>
<dbReference type="GO" id="GO:0101030">
    <property type="term" value="P:tRNA-guanine transglycosylation"/>
    <property type="evidence" value="ECO:0007669"/>
    <property type="project" value="InterPro"/>
</dbReference>
<dbReference type="FunFam" id="3.20.20.105:FF:000001">
    <property type="entry name" value="Queuine tRNA-ribosyltransferase"/>
    <property type="match status" value="1"/>
</dbReference>
<dbReference type="Gene3D" id="3.20.20.105">
    <property type="entry name" value="Queuine tRNA-ribosyltransferase-like"/>
    <property type="match status" value="1"/>
</dbReference>
<dbReference type="HAMAP" id="MF_00168">
    <property type="entry name" value="Q_tRNA_Tgt"/>
    <property type="match status" value="1"/>
</dbReference>
<dbReference type="InterPro" id="IPR050076">
    <property type="entry name" value="ArchSynthase1/Queuine_TRR"/>
</dbReference>
<dbReference type="InterPro" id="IPR004803">
    <property type="entry name" value="TGT"/>
</dbReference>
<dbReference type="InterPro" id="IPR036511">
    <property type="entry name" value="TGT-like_sf"/>
</dbReference>
<dbReference type="InterPro" id="IPR002616">
    <property type="entry name" value="tRNA_ribo_trans-like"/>
</dbReference>
<dbReference type="NCBIfam" id="TIGR00430">
    <property type="entry name" value="Q_tRNA_tgt"/>
    <property type="match status" value="1"/>
</dbReference>
<dbReference type="NCBIfam" id="TIGR00449">
    <property type="entry name" value="tgt_general"/>
    <property type="match status" value="1"/>
</dbReference>
<dbReference type="PANTHER" id="PTHR46499">
    <property type="entry name" value="QUEUINE TRNA-RIBOSYLTRANSFERASE"/>
    <property type="match status" value="1"/>
</dbReference>
<dbReference type="PANTHER" id="PTHR46499:SF1">
    <property type="entry name" value="QUEUINE TRNA-RIBOSYLTRANSFERASE"/>
    <property type="match status" value="1"/>
</dbReference>
<dbReference type="Pfam" id="PF01702">
    <property type="entry name" value="TGT"/>
    <property type="match status" value="1"/>
</dbReference>
<dbReference type="SUPFAM" id="SSF51713">
    <property type="entry name" value="tRNA-guanine transglycosylase"/>
    <property type="match status" value="1"/>
</dbReference>
<sequence>MPAVTYEHIKTCKQSGARLGIVHTPHGSFETPMFMPVGTKATVKTMSPEELRQIEAKIILGNTYHLWLQPGNDIIKHAGGLHKFMNWDGPILTDSGGFQVFSLSNLRKITEEGVEFRHHTNGSKLFLSPEKSMQIQNDLGSDIMMAFDECPPMPAEYDYVKKSIERTTRWAKRCLDAHQRPEDQALFGIIQGGEHEDLREQSAKDLVELDFPGYAIGGLSVGEPKPVMYKMVEHTEQFMPKDKPRYLMGVGSPDALIECSIRGMDMFDCVLPTRIARNGTCMTSQGRLVIKNAKFADDLRPLDENCDCYTCQNYSRAYIRHLIKAEETFGIRLTTIHNLHFLLKLMEDIRQAIREDRLLDFKEEFFEQYGLNVENPKNF</sequence>
<evidence type="ECO:0000255" key="1">
    <source>
        <dbReference type="HAMAP-Rule" id="MF_00168"/>
    </source>
</evidence>
<name>TGT_STAAB</name>
<feature type="chain" id="PRO_1000016864" description="Queuine tRNA-ribosyltransferase">
    <location>
        <begin position="1"/>
        <end position="379"/>
    </location>
</feature>
<feature type="region of interest" description="RNA binding" evidence="1">
    <location>
        <begin position="249"/>
        <end position="255"/>
    </location>
</feature>
<feature type="region of interest" description="RNA binding; important for wobble base 34 recognition" evidence="1">
    <location>
        <begin position="273"/>
        <end position="277"/>
    </location>
</feature>
<feature type="active site" description="Proton acceptor" evidence="1">
    <location>
        <position position="94"/>
    </location>
</feature>
<feature type="active site" description="Nucleophile" evidence="1">
    <location>
        <position position="268"/>
    </location>
</feature>
<feature type="binding site" evidence="1">
    <location>
        <begin position="94"/>
        <end position="98"/>
    </location>
    <ligand>
        <name>substrate</name>
    </ligand>
</feature>
<feature type="binding site" evidence="1">
    <location>
        <position position="148"/>
    </location>
    <ligand>
        <name>substrate</name>
    </ligand>
</feature>
<feature type="binding site" evidence="1">
    <location>
        <position position="191"/>
    </location>
    <ligand>
        <name>substrate</name>
    </ligand>
</feature>
<feature type="binding site" evidence="1">
    <location>
        <position position="218"/>
    </location>
    <ligand>
        <name>substrate</name>
    </ligand>
</feature>
<feature type="binding site" evidence="1">
    <location>
        <position position="306"/>
    </location>
    <ligand>
        <name>Zn(2+)</name>
        <dbReference type="ChEBI" id="CHEBI:29105"/>
    </ligand>
</feature>
<feature type="binding site" evidence="1">
    <location>
        <position position="308"/>
    </location>
    <ligand>
        <name>Zn(2+)</name>
        <dbReference type="ChEBI" id="CHEBI:29105"/>
    </ligand>
</feature>
<feature type="binding site" evidence="1">
    <location>
        <position position="311"/>
    </location>
    <ligand>
        <name>Zn(2+)</name>
        <dbReference type="ChEBI" id="CHEBI:29105"/>
    </ligand>
</feature>
<feature type="binding site" evidence="1">
    <location>
        <position position="337"/>
    </location>
    <ligand>
        <name>Zn(2+)</name>
        <dbReference type="ChEBI" id="CHEBI:29105"/>
    </ligand>
</feature>
<accession>Q2YT91</accession>
<proteinExistence type="inferred from homology"/>
<comment type="function">
    <text evidence="1">Catalyzes the base-exchange of a guanine (G) residue with the queuine precursor 7-aminomethyl-7-deazaguanine (PreQ1) at position 34 (anticodon wobble position) in tRNAs with GU(N) anticodons (tRNA-Asp, -Asn, -His and -Tyr). Catalysis occurs through a double-displacement mechanism. The nucleophile active site attacks the C1' of nucleotide 34 to detach the guanine base from the RNA, forming a covalent enzyme-RNA intermediate. The proton acceptor active site deprotonates the incoming PreQ1, allowing a nucleophilic attack on the C1' of the ribose to form the product. After dissociation, two additional enzymatic reactions on the tRNA convert PreQ1 to queuine (Q), resulting in the hypermodified nucleoside queuosine (7-(((4,5-cis-dihydroxy-2-cyclopenten-1-yl)amino)methyl)-7-deazaguanosine).</text>
</comment>
<comment type="catalytic activity">
    <reaction evidence="1">
        <text>7-aminomethyl-7-carbaguanine + guanosine(34) in tRNA = 7-aminomethyl-7-carbaguanosine(34) in tRNA + guanine</text>
        <dbReference type="Rhea" id="RHEA:24104"/>
        <dbReference type="Rhea" id="RHEA-COMP:10341"/>
        <dbReference type="Rhea" id="RHEA-COMP:10342"/>
        <dbReference type="ChEBI" id="CHEBI:16235"/>
        <dbReference type="ChEBI" id="CHEBI:58703"/>
        <dbReference type="ChEBI" id="CHEBI:74269"/>
        <dbReference type="ChEBI" id="CHEBI:82833"/>
        <dbReference type="EC" id="2.4.2.29"/>
    </reaction>
</comment>
<comment type="cofactor">
    <cofactor evidence="1">
        <name>Zn(2+)</name>
        <dbReference type="ChEBI" id="CHEBI:29105"/>
    </cofactor>
    <text evidence="1">Binds 1 zinc ion per subunit.</text>
</comment>
<comment type="pathway">
    <text evidence="1">tRNA modification; tRNA-queuosine biosynthesis.</text>
</comment>
<comment type="subunit">
    <text evidence="1">Homodimer. Within each dimer, one monomer is responsible for RNA recognition and catalysis, while the other monomer binds to the replacement base PreQ1.</text>
</comment>
<comment type="similarity">
    <text evidence="1">Belongs to the queuine tRNA-ribosyltransferase family.</text>
</comment>